<organism>
    <name type="scientific">Ailuropoda melanoleuca</name>
    <name type="common">Giant panda</name>
    <dbReference type="NCBI Taxonomy" id="9646"/>
    <lineage>
        <taxon>Eukaryota</taxon>
        <taxon>Metazoa</taxon>
        <taxon>Chordata</taxon>
        <taxon>Craniata</taxon>
        <taxon>Vertebrata</taxon>
        <taxon>Euteleostomi</taxon>
        <taxon>Mammalia</taxon>
        <taxon>Eutheria</taxon>
        <taxon>Laurasiatheria</taxon>
        <taxon>Carnivora</taxon>
        <taxon>Caniformia</taxon>
        <taxon>Ursidae</taxon>
        <taxon>Ailuropoda</taxon>
    </lineage>
</organism>
<name>ZSCA4_AILME</name>
<keyword id="KW-0158">Chromosome</keyword>
<keyword id="KW-0238">DNA-binding</keyword>
<keyword id="KW-0479">Metal-binding</keyword>
<keyword id="KW-0539">Nucleus</keyword>
<keyword id="KW-1185">Reference proteome</keyword>
<keyword id="KW-0677">Repeat</keyword>
<keyword id="KW-0779">Telomere</keyword>
<keyword id="KW-0804">Transcription</keyword>
<keyword id="KW-0805">Transcription regulation</keyword>
<keyword id="KW-0862">Zinc</keyword>
<keyword id="KW-0863">Zinc-finger</keyword>
<comment type="function">
    <text evidence="1">Embryonic stem (ES) cell-specific transcription factor required to regulate ES cell pluripotency. Binds telomeres and plays a key role in genomic stability in ES cells by regulating telomere elongation. Acts as an activator of spontaneous telomere sister chromatid exchange (T-SCE) and telomere elongation in undifferentiated ES cells (By similarity).</text>
</comment>
<comment type="subcellular location">
    <subcellularLocation>
        <location evidence="3">Nucleus</location>
    </subcellularLocation>
    <subcellularLocation>
        <location evidence="1">Chromosome</location>
        <location evidence="1">Telomere</location>
    </subcellularLocation>
</comment>
<gene>
    <name type="primary">ZSCAN4</name>
    <name type="ORF">PANDA_014157</name>
</gene>
<dbReference type="EMBL" id="GL193184">
    <property type="protein sequence ID" value="EFB14447.1"/>
    <property type="molecule type" value="Genomic_DNA"/>
</dbReference>
<dbReference type="SMR" id="D2HQI1"/>
<dbReference type="STRING" id="9646.ENSAMEP00000005165"/>
<dbReference type="eggNOG" id="KOG1721">
    <property type="taxonomic scope" value="Eukaryota"/>
</dbReference>
<dbReference type="InParanoid" id="D2HQI1"/>
<dbReference type="Proteomes" id="UP000008912">
    <property type="component" value="Unassembled WGS sequence"/>
</dbReference>
<dbReference type="GO" id="GO:0000785">
    <property type="term" value="C:chromatin"/>
    <property type="evidence" value="ECO:0007669"/>
    <property type="project" value="TreeGrafter"/>
</dbReference>
<dbReference type="GO" id="GO:0000781">
    <property type="term" value="C:chromosome, telomeric region"/>
    <property type="evidence" value="ECO:0000250"/>
    <property type="project" value="UniProtKB"/>
</dbReference>
<dbReference type="GO" id="GO:0031519">
    <property type="term" value="C:PcG protein complex"/>
    <property type="evidence" value="ECO:0007669"/>
    <property type="project" value="TreeGrafter"/>
</dbReference>
<dbReference type="GO" id="GO:0005667">
    <property type="term" value="C:transcription regulator complex"/>
    <property type="evidence" value="ECO:0007669"/>
    <property type="project" value="TreeGrafter"/>
</dbReference>
<dbReference type="GO" id="GO:0000981">
    <property type="term" value="F:DNA-binding transcription factor activity, RNA polymerase II-specific"/>
    <property type="evidence" value="ECO:0007669"/>
    <property type="project" value="TreeGrafter"/>
</dbReference>
<dbReference type="GO" id="GO:0000978">
    <property type="term" value="F:RNA polymerase II cis-regulatory region sequence-specific DNA binding"/>
    <property type="evidence" value="ECO:0007669"/>
    <property type="project" value="TreeGrafter"/>
</dbReference>
<dbReference type="GO" id="GO:0008270">
    <property type="term" value="F:zinc ion binding"/>
    <property type="evidence" value="ECO:0007669"/>
    <property type="project" value="UniProtKB-KW"/>
</dbReference>
<dbReference type="GO" id="GO:0010833">
    <property type="term" value="P:telomere maintenance via telomere lengthening"/>
    <property type="evidence" value="ECO:0000250"/>
    <property type="project" value="UniProtKB"/>
</dbReference>
<dbReference type="FunFam" id="1.10.4020.10:FF:000004">
    <property type="entry name" value="Zinc finger and SCAN domain containing 4"/>
    <property type="match status" value="1"/>
</dbReference>
<dbReference type="FunFam" id="3.30.160.60:FF:001615">
    <property type="entry name" value="Zinc finger and SCAN domain containing 4"/>
    <property type="match status" value="1"/>
</dbReference>
<dbReference type="FunFam" id="3.30.160.60:FF:001779">
    <property type="entry name" value="Zinc finger and SCAN domain containing 4"/>
    <property type="match status" value="1"/>
</dbReference>
<dbReference type="FunFam" id="3.30.160.60:FF:001992">
    <property type="entry name" value="Zinc finger and SCAN domain-containing protein 4"/>
    <property type="match status" value="1"/>
</dbReference>
<dbReference type="FunFam" id="3.30.160.60:FF:000358">
    <property type="entry name" value="zinc finger protein 24"/>
    <property type="match status" value="1"/>
</dbReference>
<dbReference type="Gene3D" id="3.30.160.60">
    <property type="entry name" value="Classic Zinc Finger"/>
    <property type="match status" value="4"/>
</dbReference>
<dbReference type="Gene3D" id="1.10.4020.10">
    <property type="entry name" value="DNA breaking-rejoining enzymes"/>
    <property type="match status" value="1"/>
</dbReference>
<dbReference type="InterPro" id="IPR003309">
    <property type="entry name" value="SCAN_dom"/>
</dbReference>
<dbReference type="InterPro" id="IPR038269">
    <property type="entry name" value="SCAN_sf"/>
</dbReference>
<dbReference type="InterPro" id="IPR036236">
    <property type="entry name" value="Znf_C2H2_sf"/>
</dbReference>
<dbReference type="InterPro" id="IPR013087">
    <property type="entry name" value="Znf_C2H2_type"/>
</dbReference>
<dbReference type="PANTHER" id="PTHR14003">
    <property type="entry name" value="TRANSCRIPTIONAL REPRESSOR PROTEIN YY"/>
    <property type="match status" value="1"/>
</dbReference>
<dbReference type="PANTHER" id="PTHR14003:SF23">
    <property type="entry name" value="ZINC FINGER PROTEIN 143"/>
    <property type="match status" value="1"/>
</dbReference>
<dbReference type="Pfam" id="PF02023">
    <property type="entry name" value="SCAN"/>
    <property type="match status" value="1"/>
</dbReference>
<dbReference type="Pfam" id="PF00096">
    <property type="entry name" value="zf-C2H2"/>
    <property type="match status" value="4"/>
</dbReference>
<dbReference type="SMART" id="SM00431">
    <property type="entry name" value="SCAN"/>
    <property type="match status" value="1"/>
</dbReference>
<dbReference type="SMART" id="SM00355">
    <property type="entry name" value="ZnF_C2H2"/>
    <property type="match status" value="4"/>
</dbReference>
<dbReference type="SUPFAM" id="SSF57667">
    <property type="entry name" value="beta-beta-alpha zinc fingers"/>
    <property type="match status" value="2"/>
</dbReference>
<dbReference type="SUPFAM" id="SSF47353">
    <property type="entry name" value="Retrovirus capsid dimerization domain-like"/>
    <property type="match status" value="1"/>
</dbReference>
<dbReference type="PROSITE" id="PS50804">
    <property type="entry name" value="SCAN_BOX"/>
    <property type="match status" value="1"/>
</dbReference>
<dbReference type="PROSITE" id="PS00028">
    <property type="entry name" value="ZINC_FINGER_C2H2_1"/>
    <property type="match status" value="4"/>
</dbReference>
<dbReference type="PROSITE" id="PS50157">
    <property type="entry name" value="ZINC_FINGER_C2H2_2"/>
    <property type="match status" value="4"/>
</dbReference>
<reference key="1">
    <citation type="journal article" date="2010" name="Nature">
        <title>The sequence and de novo assembly of the giant panda genome.</title>
        <authorList>
            <person name="Li R."/>
            <person name="Fan W."/>
            <person name="Tian G."/>
            <person name="Zhu H."/>
            <person name="He L."/>
            <person name="Cai J."/>
            <person name="Huang Q."/>
            <person name="Cai Q."/>
            <person name="Li B."/>
            <person name="Bai Y."/>
            <person name="Zhang Z."/>
            <person name="Zhang Y."/>
            <person name="Wang W."/>
            <person name="Li J."/>
            <person name="Wei F."/>
            <person name="Li H."/>
            <person name="Jian M."/>
            <person name="Li J."/>
            <person name="Zhang Z."/>
            <person name="Nielsen R."/>
            <person name="Li D."/>
            <person name="Gu W."/>
            <person name="Yang Z."/>
            <person name="Xuan Z."/>
            <person name="Ryder O.A."/>
            <person name="Leung F.C."/>
            <person name="Zhou Y."/>
            <person name="Cao J."/>
            <person name="Sun X."/>
            <person name="Fu Y."/>
            <person name="Fang X."/>
            <person name="Guo X."/>
            <person name="Wang B."/>
            <person name="Hou R."/>
            <person name="Shen F."/>
            <person name="Mu B."/>
            <person name="Ni P."/>
            <person name="Lin R."/>
            <person name="Qian W."/>
            <person name="Wang G."/>
            <person name="Yu C."/>
            <person name="Nie W."/>
            <person name="Wang J."/>
            <person name="Wu Z."/>
            <person name="Liang H."/>
            <person name="Min J."/>
            <person name="Wu Q."/>
            <person name="Cheng S."/>
            <person name="Ruan J."/>
            <person name="Wang M."/>
            <person name="Shi Z."/>
            <person name="Wen M."/>
            <person name="Liu B."/>
            <person name="Ren X."/>
            <person name="Zheng H."/>
            <person name="Dong D."/>
            <person name="Cook K."/>
            <person name="Shan G."/>
            <person name="Zhang H."/>
            <person name="Kosiol C."/>
            <person name="Xie X."/>
            <person name="Lu Z."/>
            <person name="Zheng H."/>
            <person name="Li Y."/>
            <person name="Steiner C.C."/>
            <person name="Lam T.T."/>
            <person name="Lin S."/>
            <person name="Zhang Q."/>
            <person name="Li G."/>
            <person name="Tian J."/>
            <person name="Gong T."/>
            <person name="Liu H."/>
            <person name="Zhang D."/>
            <person name="Fang L."/>
            <person name="Ye C."/>
            <person name="Zhang J."/>
            <person name="Hu W."/>
            <person name="Xu A."/>
            <person name="Ren Y."/>
            <person name="Zhang G."/>
            <person name="Bruford M.W."/>
            <person name="Li Q."/>
            <person name="Ma L."/>
            <person name="Guo Y."/>
            <person name="An N."/>
            <person name="Hu Y."/>
            <person name="Zheng Y."/>
            <person name="Shi Y."/>
            <person name="Li Z."/>
            <person name="Liu Q."/>
            <person name="Chen Y."/>
            <person name="Zhao J."/>
            <person name="Qu N."/>
            <person name="Zhao S."/>
            <person name="Tian F."/>
            <person name="Wang X."/>
            <person name="Wang H."/>
            <person name="Xu L."/>
            <person name="Liu X."/>
            <person name="Vinar T."/>
            <person name="Wang Y."/>
            <person name="Lam T.W."/>
            <person name="Yiu S.M."/>
            <person name="Liu S."/>
            <person name="Zhang H."/>
            <person name="Li D."/>
            <person name="Huang Y."/>
            <person name="Wang X."/>
            <person name="Yang G."/>
            <person name="Jiang Z."/>
            <person name="Wang J."/>
            <person name="Qin N."/>
            <person name="Li L."/>
            <person name="Li J."/>
            <person name="Bolund L."/>
            <person name="Kristiansen K."/>
            <person name="Wong G.K."/>
            <person name="Olson M."/>
            <person name="Zhang X."/>
            <person name="Li S."/>
            <person name="Yang H."/>
            <person name="Wang J."/>
            <person name="Wang J."/>
        </authorList>
    </citation>
    <scope>NUCLEOTIDE SEQUENCE [LARGE SCALE GENOMIC DNA]</scope>
</reference>
<evidence type="ECO:0000250" key="1"/>
<evidence type="ECO:0000255" key="2">
    <source>
        <dbReference type="PROSITE-ProRule" id="PRU00042"/>
    </source>
</evidence>
<evidence type="ECO:0000255" key="3">
    <source>
        <dbReference type="PROSITE-ProRule" id="PRU00187"/>
    </source>
</evidence>
<evidence type="ECO:0000256" key="4">
    <source>
        <dbReference type="SAM" id="MobiDB-lite"/>
    </source>
</evidence>
<feature type="chain" id="PRO_0000394243" description="Zinc finger and SCAN domain-containing protein 4">
    <location>
        <begin position="1"/>
        <end position="430"/>
    </location>
</feature>
<feature type="domain" description="SCAN box" evidence="3">
    <location>
        <begin position="44"/>
        <end position="126"/>
    </location>
</feature>
<feature type="zinc finger region" description="C2H2-type 1" evidence="2">
    <location>
        <begin position="309"/>
        <end position="331"/>
    </location>
</feature>
<feature type="zinc finger region" description="C2H2-type 2" evidence="2">
    <location>
        <begin position="337"/>
        <end position="359"/>
    </location>
</feature>
<feature type="zinc finger region" description="C2H2-type 3" evidence="2">
    <location>
        <begin position="365"/>
        <end position="387"/>
    </location>
</feature>
<feature type="zinc finger region" description="C2H2-type 4" evidence="2">
    <location>
        <begin position="393"/>
        <end position="415"/>
    </location>
</feature>
<feature type="region of interest" description="Disordered" evidence="4">
    <location>
        <begin position="1"/>
        <end position="38"/>
    </location>
</feature>
<feature type="region of interest" description="Disordered" evidence="4">
    <location>
        <begin position="164"/>
        <end position="196"/>
    </location>
</feature>
<feature type="region of interest" description="Disordered" evidence="4">
    <location>
        <begin position="224"/>
        <end position="257"/>
    </location>
</feature>
<feature type="region of interest" description="Disordered" evidence="4">
    <location>
        <begin position="281"/>
        <end position="300"/>
    </location>
</feature>
<feature type="compositionally biased region" description="Polar residues" evidence="4">
    <location>
        <begin position="164"/>
        <end position="185"/>
    </location>
</feature>
<proteinExistence type="inferred from homology"/>
<protein>
    <recommendedName>
        <fullName>Zinc finger and SCAN domain-containing protein 4</fullName>
    </recommendedName>
</protein>
<accession>D2HQI1</accession>
<sequence length="430" mass="48888">MASDLRISFQGEPSRNDPGSENLEHKPSQGPAVQEEEETYEFLRTQLSLLQNSNNSCARQELQNLYKLFHSWLQPEKHSKDEIISCLVLEQFMINGHCSDRSMLKEKWNASGRNLEKFMEDLTDESMKPPGLVHVHMQGQEALFSENMPLKEVIVHLTKQLSVGSPTGTDMETPSWTPQDTSLETGQGEWGDKENGDNIYHINDSITSQGNEIPSLLIIREEDYPRPEEDSVSLKNPLSSRKAGLGMSGSQEGSLKGPSYQDVLMEGGPGFLSQSIQVSPEPVPTHQRTEGNSTRGGHQERCREAQNSYRCEKCPKIFRYFSQLKAHQRRHNNERTFTCAECNRGFFQASDLHVHQKIHAEEKPFTCSTCEKSFSHKTNLLAHERIHTGEKPYECSLCHRSYRQSSTYHRHLRNHQKSAFRGVSSTPEAS</sequence>